<sequence length="141" mass="14941">MAKKVVGFIKLQIPAGAANPAPPVGPALGQKGVNIMEFCKQFNAKTQSQSGTIIPVVITVYSDKSFTFITKTPPAAVLLVKEAGLQKGSGEPNKNKVGKVTEEQVRKIAELKMPDLNAFDIDGAMQMIRGTARSMGIVVEG</sequence>
<proteinExistence type="inferred from homology"/>
<evidence type="ECO:0000255" key="1">
    <source>
        <dbReference type="HAMAP-Rule" id="MF_00736"/>
    </source>
</evidence>
<evidence type="ECO:0000305" key="2"/>
<organism>
    <name type="scientific">Chlorobium phaeobacteroides (strain BS1)</name>
    <dbReference type="NCBI Taxonomy" id="331678"/>
    <lineage>
        <taxon>Bacteria</taxon>
        <taxon>Pseudomonadati</taxon>
        <taxon>Chlorobiota</taxon>
        <taxon>Chlorobiia</taxon>
        <taxon>Chlorobiales</taxon>
        <taxon>Chlorobiaceae</taxon>
        <taxon>Chlorobium/Pelodictyon group</taxon>
        <taxon>Chlorobium</taxon>
    </lineage>
</organism>
<keyword id="KW-0488">Methylation</keyword>
<keyword id="KW-0687">Ribonucleoprotein</keyword>
<keyword id="KW-0689">Ribosomal protein</keyword>
<keyword id="KW-0694">RNA-binding</keyword>
<keyword id="KW-0699">rRNA-binding</keyword>
<feature type="chain" id="PRO_1000195596" description="Large ribosomal subunit protein uL11">
    <location>
        <begin position="1"/>
        <end position="141"/>
    </location>
</feature>
<accession>B3EL57</accession>
<gene>
    <name evidence="1" type="primary">rplK</name>
    <name type="ordered locus">Cphamn1_0315</name>
</gene>
<comment type="function">
    <text evidence="1">Forms part of the ribosomal stalk which helps the ribosome interact with GTP-bound translation factors.</text>
</comment>
<comment type="subunit">
    <text evidence="1">Part of the ribosomal stalk of the 50S ribosomal subunit. Interacts with L10 and the large rRNA to form the base of the stalk. L10 forms an elongated spine to which L12 dimers bind in a sequential fashion forming a multimeric L10(L12)X complex.</text>
</comment>
<comment type="PTM">
    <text evidence="1">One or more lysine residues are methylated.</text>
</comment>
<comment type="similarity">
    <text evidence="1">Belongs to the universal ribosomal protein uL11 family.</text>
</comment>
<name>RL11_CHLPB</name>
<reference key="1">
    <citation type="submission" date="2008-06" db="EMBL/GenBank/DDBJ databases">
        <title>Complete sequence of Chlorobium phaeobacteroides BS1.</title>
        <authorList>
            <consortium name="US DOE Joint Genome Institute"/>
            <person name="Lucas S."/>
            <person name="Copeland A."/>
            <person name="Lapidus A."/>
            <person name="Glavina del Rio T."/>
            <person name="Dalin E."/>
            <person name="Tice H."/>
            <person name="Bruce D."/>
            <person name="Goodwin L."/>
            <person name="Pitluck S."/>
            <person name="Schmutz J."/>
            <person name="Larimer F."/>
            <person name="Land M."/>
            <person name="Hauser L."/>
            <person name="Kyrpides N."/>
            <person name="Ovchinnikova G."/>
            <person name="Li T."/>
            <person name="Liu Z."/>
            <person name="Zhao F."/>
            <person name="Overmann J."/>
            <person name="Bryant D.A."/>
            <person name="Richardson P."/>
        </authorList>
    </citation>
    <scope>NUCLEOTIDE SEQUENCE [LARGE SCALE GENOMIC DNA]</scope>
    <source>
        <strain>BS1</strain>
    </source>
</reference>
<dbReference type="EMBL" id="CP001101">
    <property type="protein sequence ID" value="ACE03284.1"/>
    <property type="molecule type" value="Genomic_DNA"/>
</dbReference>
<dbReference type="SMR" id="B3EL57"/>
<dbReference type="STRING" id="331678.Cphamn1_0315"/>
<dbReference type="KEGG" id="cpb:Cphamn1_0315"/>
<dbReference type="eggNOG" id="COG0080">
    <property type="taxonomic scope" value="Bacteria"/>
</dbReference>
<dbReference type="HOGENOM" id="CLU_074237_2_1_10"/>
<dbReference type="OrthoDB" id="9802408at2"/>
<dbReference type="GO" id="GO:0022625">
    <property type="term" value="C:cytosolic large ribosomal subunit"/>
    <property type="evidence" value="ECO:0007669"/>
    <property type="project" value="TreeGrafter"/>
</dbReference>
<dbReference type="GO" id="GO:0070180">
    <property type="term" value="F:large ribosomal subunit rRNA binding"/>
    <property type="evidence" value="ECO:0007669"/>
    <property type="project" value="UniProtKB-UniRule"/>
</dbReference>
<dbReference type="GO" id="GO:0003735">
    <property type="term" value="F:structural constituent of ribosome"/>
    <property type="evidence" value="ECO:0007669"/>
    <property type="project" value="InterPro"/>
</dbReference>
<dbReference type="GO" id="GO:0006412">
    <property type="term" value="P:translation"/>
    <property type="evidence" value="ECO:0007669"/>
    <property type="project" value="UniProtKB-UniRule"/>
</dbReference>
<dbReference type="CDD" id="cd00349">
    <property type="entry name" value="Ribosomal_L11"/>
    <property type="match status" value="1"/>
</dbReference>
<dbReference type="FunFam" id="1.10.10.250:FF:000001">
    <property type="entry name" value="50S ribosomal protein L11"/>
    <property type="match status" value="1"/>
</dbReference>
<dbReference type="FunFam" id="3.30.1550.10:FF:000001">
    <property type="entry name" value="50S ribosomal protein L11"/>
    <property type="match status" value="1"/>
</dbReference>
<dbReference type="Gene3D" id="1.10.10.250">
    <property type="entry name" value="Ribosomal protein L11, C-terminal domain"/>
    <property type="match status" value="1"/>
</dbReference>
<dbReference type="Gene3D" id="3.30.1550.10">
    <property type="entry name" value="Ribosomal protein L11/L12, N-terminal domain"/>
    <property type="match status" value="1"/>
</dbReference>
<dbReference type="HAMAP" id="MF_00736">
    <property type="entry name" value="Ribosomal_uL11"/>
    <property type="match status" value="1"/>
</dbReference>
<dbReference type="InterPro" id="IPR000911">
    <property type="entry name" value="Ribosomal_uL11"/>
</dbReference>
<dbReference type="InterPro" id="IPR006519">
    <property type="entry name" value="Ribosomal_uL11_bac-typ"/>
</dbReference>
<dbReference type="InterPro" id="IPR020783">
    <property type="entry name" value="Ribosomal_uL11_C"/>
</dbReference>
<dbReference type="InterPro" id="IPR036769">
    <property type="entry name" value="Ribosomal_uL11_C_sf"/>
</dbReference>
<dbReference type="InterPro" id="IPR020784">
    <property type="entry name" value="Ribosomal_uL11_N"/>
</dbReference>
<dbReference type="InterPro" id="IPR036796">
    <property type="entry name" value="Ribosomal_uL11_N_sf"/>
</dbReference>
<dbReference type="NCBIfam" id="TIGR01632">
    <property type="entry name" value="L11_bact"/>
    <property type="match status" value="1"/>
</dbReference>
<dbReference type="PANTHER" id="PTHR11661">
    <property type="entry name" value="60S RIBOSOMAL PROTEIN L12"/>
    <property type="match status" value="1"/>
</dbReference>
<dbReference type="PANTHER" id="PTHR11661:SF1">
    <property type="entry name" value="LARGE RIBOSOMAL SUBUNIT PROTEIN UL11M"/>
    <property type="match status" value="1"/>
</dbReference>
<dbReference type="Pfam" id="PF00298">
    <property type="entry name" value="Ribosomal_L11"/>
    <property type="match status" value="1"/>
</dbReference>
<dbReference type="Pfam" id="PF03946">
    <property type="entry name" value="Ribosomal_L11_N"/>
    <property type="match status" value="1"/>
</dbReference>
<dbReference type="SMART" id="SM00649">
    <property type="entry name" value="RL11"/>
    <property type="match status" value="1"/>
</dbReference>
<dbReference type="SUPFAM" id="SSF54747">
    <property type="entry name" value="Ribosomal L11/L12e N-terminal domain"/>
    <property type="match status" value="1"/>
</dbReference>
<dbReference type="SUPFAM" id="SSF46906">
    <property type="entry name" value="Ribosomal protein L11, C-terminal domain"/>
    <property type="match status" value="1"/>
</dbReference>
<protein>
    <recommendedName>
        <fullName evidence="1">Large ribosomal subunit protein uL11</fullName>
    </recommendedName>
    <alternativeName>
        <fullName evidence="2">50S ribosomal protein L11</fullName>
    </alternativeName>
</protein>